<protein>
    <recommendedName>
        <fullName evidence="11">Cytolytic toxin-beta</fullName>
        <shortName evidence="7">Sp-CTx-beta</shortName>
    </recommendedName>
</protein>
<comment type="function">
    <text evidence="2 5 6">This heterodimer induces potent hemolytic activities (when tested on rabbit erythrocytes, EC(50)=25-56 ng/mL) due to its ability to form pores in the cell membrane (PubMed:20493199, PubMed:23933196). The pore may be composed of 10 alpha/beta heterodimers (By similarity). The toxin shows cardiovascular effects that include a vasorelaxant action that may involve the L-arginine-nitric oxid synthase pathway (PubMed:20493199). In addition, it displays edema-inducing activities, increases vascular permeability (By similarity). It also shows myotoxic activities and interferes irreversibly with neuromuscular function (By similarity). It also induces irreversible platelet aggregation in rabbit or rat (but not in human or mouse) whole blood (By similarity). In addition, it has been observed to increase spontaneous quantal acetylcholine release from isolated frog cutaneous pectoris motor endings (By similarity).</text>
</comment>
<comment type="subunit">
    <text evidence="5 6">Heterodimer of alpha and beta subunits (PubMed:20493199); non-covalently linked. Also associates into tetramers or even higher aggregates (PubMed:20493199, PubMed:23933196).</text>
</comment>
<comment type="subcellular location">
    <subcellularLocation>
        <location evidence="5 6">Secreted</location>
    </subcellularLocation>
</comment>
<comment type="tissue specificity">
    <text evidence="9 10">Expressed by the venom gland.</text>
</comment>
<comment type="domain">
    <text evidence="1">The first domain (residues 2-265) is structurally homologous to the membrane attack complex-ferforin/cholesterol-dependent cytolysin (MACPF/CDC) pore-forming domain. It makes numerous contacts with the FAT domain and comprise essentially the core pore-forming machinery.</text>
</comment>
<comment type="domain">
    <text evidence="1">The second domain is structurally homologous to the focal adhesion-targeting (FAT) domain (266-385). It makes numerous in cis contacts with the MACPF/CDC domain (first domain) and the thioredoxin (THX) domain (third domain) as well as extensive in trans interactions at the SNTX-alpha/beta interface.</text>
</comment>
<comment type="domain">
    <text evidence="1">The third domain corresponds to the thioredoxin (THX) domain. It makes numerous contacts with the second domain (FAT domain). Since it lacks the canonical catalytic residues, it may only play a purely structural role.</text>
</comment>
<comment type="domain">
    <text evidence="1">The fourth domain corresponds to the B30.2/SPRY domain. This domain would be responsible for initial interaction with the cell surface through either lipid- or protein-mediated interactions.</text>
</comment>
<comment type="PTM">
    <text evidence="1">Intrachain disulfide bonds may be present in the heterodimer.</text>
</comment>
<comment type="similarity">
    <text evidence="8">Belongs to the SNTX/VTX toxin family.</text>
</comment>
<keyword id="KW-0204">Cytolysis</keyword>
<keyword id="KW-1015">Disulfide bond</keyword>
<keyword id="KW-0325">Glycoprotein</keyword>
<keyword id="KW-0354">Hemolysis</keyword>
<keyword id="KW-0959">Myotoxin</keyword>
<keyword id="KW-0528">Neurotoxin</keyword>
<keyword id="KW-0964">Secreted</keyword>
<keyword id="KW-0800">Toxin</keyword>
<name>CTXB_SCOPL</name>
<sequence length="702" mass="80127">MPSDILVVAALGRPFTLGALYDARKDKLYPGFTLWEHEVLEESTVESDQPSSTFEITASDSIDDKSSLMDIEASLKASFLGGLIEVGGSAKYLNDTKKFKNQSRVTLQYKATTSFKQLMTNLETKHVEYSEYFQNIEATHVVIGILYGANAFFVFDSDKVDSSNVQDIQGSMEAVIKKIPSVEISGQGSVQLTSEESDITNSFSCKFHGDFHLPSNPTTFEDAVKTYQQLPQMMGKETAVPMTVWLVPMTNFYSEAPQLMADSSTPILRKVRNTLEAMRQLDMRCNDSLERRHSEAGFHCLKKKLKTFQKHYERLHVNPFRKNHFPETFSPSGKGTKMKLQCLPTFRNKLRSPSNINSLNMWMDCAEREINVLRSCIDIIEEAKHKVVLSKSQMARELDDSEVKHAVCYVFTYVTDYDPFLNALSDFSKSIKPKKYSPSKKDYWYTSDDVPEMMREKAHHFYNLAKDMENRCVRFLVASIVNPKEEGAAIHYYREGIQIINDFSNPRIPPVETIQDQESYSGMTVSSPWKETAHPALHLSEGNKKAMSGKPQPSDNNPKRFDHYQQVLCNKGLSKRHYWEVEWCGYVRAGITYKGIQRKTFASECSLGHTDMSWVFDYYPKSGYHHIYNNKKVRVKVASPGFDRLGVYLDWPAGTLSFYMVTSTWVTHLHTFSIRFNEAVYPAFLIGHGQKNANGQIKLKGE</sequence>
<reference key="1">
    <citation type="journal article" date="2018" name="J. Venom. Anim. Toxins Incl. Trop. Dis.">
        <title>Sequence analysis of the cDNA encoding for SpCTx: a lethal factor from scorpionfish venom (Scorpaena plumieri).</title>
        <authorList>
            <person name="Costa F.L.S."/>
            <person name="De Lima M.E."/>
            <person name="Figueiredo S.G."/>
            <person name="Ferreira R.S."/>
            <person name="Prates N.S."/>
            <person name="Sakamoto T."/>
            <person name="Salas C.E."/>
        </authorList>
    </citation>
    <scope>NUCLEOTIDE SEQUENCE [MRNA]</scope>
    <scope>3D-STRUCTURE MODELING</scope>
    <source>
        <tissue>Venom gland</tissue>
    </source>
</reference>
<reference key="2">
    <citation type="journal article" date="2013" name="Toxicon">
        <title>Molecular and biochemical characterization of a cytolysin from the Scorpaena plumieri (scorpionfish) venom: evidence of pore formation on erythrocyte cell membrane.</title>
        <authorList>
            <person name="Gomes H.L."/>
            <person name="Andrich F."/>
            <person name="Fortes-Dias C.L."/>
            <person name="Perales J."/>
            <person name="Teixeira-Ferreira A."/>
            <person name="Vassallo D.V."/>
            <person name="Cruz J.S."/>
            <person name="Figueiredo S.G."/>
        </authorList>
    </citation>
    <scope>FUNCTION</scope>
    <scope>IDENTIFICATION BY MASS SPECTROMETRY</scope>
    <source>
        <tissue>Venom</tissue>
    </source>
</reference>
<reference key="3">
    <citation type="journal article" date="2010" name="Toxicon">
        <title>A potent vasoactive cytolysin isolated from Scorpaena plumieri scorpionfish venom.</title>
        <authorList>
            <person name="Andrich F."/>
            <person name="Carnielli J.B."/>
            <person name="Cassoli J.S."/>
            <person name="Lautner R.Q."/>
            <person name="Santos R.A."/>
            <person name="Pimenta A.M."/>
            <person name="de Lima M.E."/>
            <person name="Figueiredo S.G."/>
        </authorList>
    </citation>
    <scope>FUNCTION</scope>
    <scope>SUBCELLULAR LOCATION</scope>
    <scope>SUBUNIT</scope>
    <scope>GLYCOSYLATION</scope>
    <source>
        <tissue>Venom</tissue>
    </source>
</reference>
<proteinExistence type="evidence at protein level"/>
<feature type="initiator methionine" description="Removed" evidence="1">
    <location>
        <position position="1"/>
    </location>
</feature>
<feature type="chain" id="PRO_0000451468" description="Cytolytic toxin-beta">
    <location>
        <begin position="2"/>
        <end position="702"/>
    </location>
</feature>
<feature type="domain" description="B30.2/SPRY" evidence="4">
    <location>
        <begin position="504"/>
        <end position="702"/>
    </location>
</feature>
<feature type="region of interest" description="Structural MACPF/CDC pore-forming domain" evidence="2">
    <location>
        <begin position="2"/>
        <end position="264"/>
    </location>
</feature>
<feature type="region of interest" description="Structural FAT domain" evidence="2">
    <location>
        <begin position="265"/>
        <end position="387"/>
    </location>
</feature>
<feature type="region of interest" description="Thioredoxin (THX) domain" evidence="2">
    <location>
        <begin position="388"/>
        <end position="515"/>
    </location>
</feature>
<feature type="glycosylation site" description="N-linked (GlcNAc...) asparagine" evidence="3">
    <location>
        <position position="94"/>
    </location>
</feature>
<feature type="glycosylation site" description="N-linked (GlcNAc...) asparagine" evidence="3">
    <location>
        <position position="101"/>
    </location>
</feature>
<feature type="glycosylation site" description="N-linked (GlcNAc...) asparagine" evidence="3">
    <location>
        <position position="286"/>
    </location>
</feature>
<accession>A0A2P1BRP3</accession>
<dbReference type="EMBL" id="MG053104">
    <property type="protein sequence ID" value="AVI44917.1"/>
    <property type="molecule type" value="mRNA"/>
</dbReference>
<dbReference type="SMR" id="A0A2P1BRP3"/>
<dbReference type="GO" id="GO:0005576">
    <property type="term" value="C:extracellular region"/>
    <property type="evidence" value="ECO:0007669"/>
    <property type="project" value="UniProtKB-SubCell"/>
</dbReference>
<dbReference type="GO" id="GO:0090729">
    <property type="term" value="F:toxin activity"/>
    <property type="evidence" value="ECO:0007669"/>
    <property type="project" value="UniProtKB-KW"/>
</dbReference>
<dbReference type="GO" id="GO:0031640">
    <property type="term" value="P:killing of cells of another organism"/>
    <property type="evidence" value="ECO:0007669"/>
    <property type="project" value="UniProtKB-KW"/>
</dbReference>
<dbReference type="Gene3D" id="2.60.120.920">
    <property type="match status" value="1"/>
</dbReference>
<dbReference type="InterPro" id="IPR001870">
    <property type="entry name" value="B30.2/SPRY"/>
</dbReference>
<dbReference type="InterPro" id="IPR043136">
    <property type="entry name" value="B30.2/SPRY_sf"/>
</dbReference>
<dbReference type="InterPro" id="IPR013320">
    <property type="entry name" value="ConA-like_dom_sf"/>
</dbReference>
<dbReference type="InterPro" id="IPR052090">
    <property type="entry name" value="Cytolytic_pore-forming_toxin"/>
</dbReference>
<dbReference type="InterPro" id="IPR006574">
    <property type="entry name" value="PRY"/>
</dbReference>
<dbReference type="InterPro" id="IPR056072">
    <property type="entry name" value="SNTX_MACPF/CDC-like_dom"/>
</dbReference>
<dbReference type="InterPro" id="IPR003877">
    <property type="entry name" value="SPRY_dom"/>
</dbReference>
<dbReference type="InterPro" id="IPR048997">
    <property type="entry name" value="Stonustoxin-like_helical"/>
</dbReference>
<dbReference type="InterPro" id="IPR040581">
    <property type="entry name" value="Thioredoxin_11"/>
</dbReference>
<dbReference type="PANTHER" id="PTHR31594">
    <property type="entry name" value="AIG1-TYPE G DOMAIN-CONTAINING PROTEIN"/>
    <property type="match status" value="1"/>
</dbReference>
<dbReference type="PANTHER" id="PTHR31594:SF16">
    <property type="entry name" value="SI:CH211-281L24.3"/>
    <property type="match status" value="1"/>
</dbReference>
<dbReference type="Pfam" id="PF24674">
    <property type="entry name" value="MACPF_SNTX"/>
    <property type="match status" value="1"/>
</dbReference>
<dbReference type="Pfam" id="PF13765">
    <property type="entry name" value="PRY"/>
    <property type="match status" value="1"/>
</dbReference>
<dbReference type="Pfam" id="PF00622">
    <property type="entry name" value="SPRY"/>
    <property type="match status" value="1"/>
</dbReference>
<dbReference type="Pfam" id="PF21109">
    <property type="entry name" value="Stonustoxin_helical"/>
    <property type="match status" value="1"/>
</dbReference>
<dbReference type="Pfam" id="PF18078">
    <property type="entry name" value="Thioredoxin_11"/>
    <property type="match status" value="1"/>
</dbReference>
<dbReference type="SMART" id="SM00589">
    <property type="entry name" value="PRY"/>
    <property type="match status" value="1"/>
</dbReference>
<dbReference type="SMART" id="SM00449">
    <property type="entry name" value="SPRY"/>
    <property type="match status" value="1"/>
</dbReference>
<dbReference type="SUPFAM" id="SSF49899">
    <property type="entry name" value="Concanavalin A-like lectins/glucanases"/>
    <property type="match status" value="1"/>
</dbReference>
<dbReference type="PROSITE" id="PS50188">
    <property type="entry name" value="B302_SPRY"/>
    <property type="match status" value="1"/>
</dbReference>
<evidence type="ECO:0000250" key="1">
    <source>
        <dbReference type="UniProtKB" id="Q91453"/>
    </source>
</evidence>
<evidence type="ECO:0000250" key="2">
    <source>
        <dbReference type="UniProtKB" id="Q98989"/>
    </source>
</evidence>
<evidence type="ECO:0000255" key="3">
    <source>
        <dbReference type="PROSITE-ProRule" id="PRU00498"/>
    </source>
</evidence>
<evidence type="ECO:0000255" key="4">
    <source>
        <dbReference type="PROSITE-ProRule" id="PRU00548"/>
    </source>
</evidence>
<evidence type="ECO:0000269" key="5">
    <source>
    </source>
</evidence>
<evidence type="ECO:0000269" key="6">
    <source>
    </source>
</evidence>
<evidence type="ECO:0000303" key="7">
    <source>
    </source>
</evidence>
<evidence type="ECO:0000305" key="8"/>
<evidence type="ECO:0000305" key="9">
    <source>
    </source>
</evidence>
<evidence type="ECO:0000305" key="10">
    <source>
    </source>
</evidence>
<evidence type="ECO:0000312" key="11">
    <source>
        <dbReference type="EMBL" id="AVI44917.1"/>
    </source>
</evidence>
<organism>
    <name type="scientific">Scorpaena plumieri</name>
    <name type="common">Spotted scorpionfish</name>
    <dbReference type="NCBI Taxonomy" id="274700"/>
    <lineage>
        <taxon>Eukaryota</taxon>
        <taxon>Metazoa</taxon>
        <taxon>Chordata</taxon>
        <taxon>Craniata</taxon>
        <taxon>Vertebrata</taxon>
        <taxon>Euteleostomi</taxon>
        <taxon>Actinopterygii</taxon>
        <taxon>Neopterygii</taxon>
        <taxon>Teleostei</taxon>
        <taxon>Neoteleostei</taxon>
        <taxon>Acanthomorphata</taxon>
        <taxon>Eupercaria</taxon>
        <taxon>Perciformes</taxon>
        <taxon>Scorpaenoidei</taxon>
        <taxon>Scorpaenidae</taxon>
        <taxon>Scorpaeninae</taxon>
        <taxon>Scorpaena</taxon>
    </lineage>
</organism>